<dbReference type="EC" id="2.7.7.60" evidence="1"/>
<dbReference type="EMBL" id="CP000653">
    <property type="protein sequence ID" value="ABP61882.1"/>
    <property type="molecule type" value="Genomic_DNA"/>
</dbReference>
<dbReference type="RefSeq" id="WP_015960211.1">
    <property type="nucleotide sequence ID" value="NC_009436.1"/>
</dbReference>
<dbReference type="SMR" id="A4WDV2"/>
<dbReference type="STRING" id="399742.Ent638_3218"/>
<dbReference type="KEGG" id="ent:Ent638_3218"/>
<dbReference type="eggNOG" id="COG1211">
    <property type="taxonomic scope" value="Bacteria"/>
</dbReference>
<dbReference type="HOGENOM" id="CLU_061281_3_1_6"/>
<dbReference type="OrthoDB" id="9806837at2"/>
<dbReference type="UniPathway" id="UPA00056">
    <property type="reaction ID" value="UER00093"/>
</dbReference>
<dbReference type="Proteomes" id="UP000000230">
    <property type="component" value="Chromosome"/>
</dbReference>
<dbReference type="GO" id="GO:0050518">
    <property type="term" value="F:2-C-methyl-D-erythritol 4-phosphate cytidylyltransferase activity"/>
    <property type="evidence" value="ECO:0007669"/>
    <property type="project" value="UniProtKB-UniRule"/>
</dbReference>
<dbReference type="GO" id="GO:0019288">
    <property type="term" value="P:isopentenyl diphosphate biosynthetic process, methylerythritol 4-phosphate pathway"/>
    <property type="evidence" value="ECO:0007669"/>
    <property type="project" value="UniProtKB-UniRule"/>
</dbReference>
<dbReference type="CDD" id="cd02516">
    <property type="entry name" value="CDP-ME_synthetase"/>
    <property type="match status" value="1"/>
</dbReference>
<dbReference type="FunFam" id="3.90.550.10:FF:000003">
    <property type="entry name" value="2-C-methyl-D-erythritol 4-phosphate cytidylyltransferase"/>
    <property type="match status" value="1"/>
</dbReference>
<dbReference type="Gene3D" id="3.90.550.10">
    <property type="entry name" value="Spore Coat Polysaccharide Biosynthesis Protein SpsA, Chain A"/>
    <property type="match status" value="1"/>
</dbReference>
<dbReference type="HAMAP" id="MF_00108">
    <property type="entry name" value="IspD"/>
    <property type="match status" value="1"/>
</dbReference>
<dbReference type="InterPro" id="IPR001228">
    <property type="entry name" value="IspD"/>
</dbReference>
<dbReference type="InterPro" id="IPR034683">
    <property type="entry name" value="IspD/TarI"/>
</dbReference>
<dbReference type="InterPro" id="IPR050088">
    <property type="entry name" value="IspD/TarI_cytidylyltransf_bact"/>
</dbReference>
<dbReference type="InterPro" id="IPR018294">
    <property type="entry name" value="ISPD_synthase_CS"/>
</dbReference>
<dbReference type="InterPro" id="IPR029044">
    <property type="entry name" value="Nucleotide-diphossugar_trans"/>
</dbReference>
<dbReference type="NCBIfam" id="TIGR00453">
    <property type="entry name" value="ispD"/>
    <property type="match status" value="1"/>
</dbReference>
<dbReference type="PANTHER" id="PTHR32125">
    <property type="entry name" value="2-C-METHYL-D-ERYTHRITOL 4-PHOSPHATE CYTIDYLYLTRANSFERASE, CHLOROPLASTIC"/>
    <property type="match status" value="1"/>
</dbReference>
<dbReference type="PANTHER" id="PTHR32125:SF4">
    <property type="entry name" value="2-C-METHYL-D-ERYTHRITOL 4-PHOSPHATE CYTIDYLYLTRANSFERASE, CHLOROPLASTIC"/>
    <property type="match status" value="1"/>
</dbReference>
<dbReference type="Pfam" id="PF01128">
    <property type="entry name" value="IspD"/>
    <property type="match status" value="1"/>
</dbReference>
<dbReference type="SUPFAM" id="SSF53448">
    <property type="entry name" value="Nucleotide-diphospho-sugar transferases"/>
    <property type="match status" value="1"/>
</dbReference>
<dbReference type="PROSITE" id="PS01295">
    <property type="entry name" value="ISPD"/>
    <property type="match status" value="1"/>
</dbReference>
<evidence type="ECO:0000255" key="1">
    <source>
        <dbReference type="HAMAP-Rule" id="MF_00108"/>
    </source>
</evidence>
<protein>
    <recommendedName>
        <fullName evidence="1">2-C-methyl-D-erythritol 4-phosphate cytidylyltransferase</fullName>
        <ecNumber evidence="1">2.7.7.60</ecNumber>
    </recommendedName>
    <alternativeName>
        <fullName evidence="1">4-diphosphocytidyl-2C-methyl-D-erythritol synthase</fullName>
    </alternativeName>
    <alternativeName>
        <fullName evidence="1">MEP cytidylyltransferase</fullName>
        <shortName evidence="1">MCT</shortName>
    </alternativeName>
</protein>
<feature type="chain" id="PRO_1000057718" description="2-C-methyl-D-erythritol 4-phosphate cytidylyltransferase">
    <location>
        <begin position="1"/>
        <end position="236"/>
    </location>
</feature>
<feature type="site" description="Transition state stabilizer" evidence="1">
    <location>
        <position position="20"/>
    </location>
</feature>
<feature type="site" description="Transition state stabilizer" evidence="1">
    <location>
        <position position="27"/>
    </location>
</feature>
<feature type="site" description="Positions MEP for the nucleophilic attack" evidence="1">
    <location>
        <position position="157"/>
    </location>
</feature>
<feature type="site" description="Positions MEP for the nucleophilic attack" evidence="1">
    <location>
        <position position="213"/>
    </location>
</feature>
<name>ISPD_ENT38</name>
<keyword id="KW-0414">Isoprene biosynthesis</keyword>
<keyword id="KW-0548">Nucleotidyltransferase</keyword>
<keyword id="KW-0808">Transferase</keyword>
<comment type="function">
    <text evidence="1">Catalyzes the formation of 4-diphosphocytidyl-2-C-methyl-D-erythritol from CTP and 2-C-methyl-D-erythritol 4-phosphate (MEP).</text>
</comment>
<comment type="catalytic activity">
    <reaction evidence="1">
        <text>2-C-methyl-D-erythritol 4-phosphate + CTP + H(+) = 4-CDP-2-C-methyl-D-erythritol + diphosphate</text>
        <dbReference type="Rhea" id="RHEA:13429"/>
        <dbReference type="ChEBI" id="CHEBI:15378"/>
        <dbReference type="ChEBI" id="CHEBI:33019"/>
        <dbReference type="ChEBI" id="CHEBI:37563"/>
        <dbReference type="ChEBI" id="CHEBI:57823"/>
        <dbReference type="ChEBI" id="CHEBI:58262"/>
        <dbReference type="EC" id="2.7.7.60"/>
    </reaction>
</comment>
<comment type="pathway">
    <text evidence="1">Isoprenoid biosynthesis; isopentenyl diphosphate biosynthesis via DXP pathway; isopentenyl diphosphate from 1-deoxy-D-xylulose 5-phosphate: step 2/6.</text>
</comment>
<comment type="subunit">
    <text evidence="1">Homodimer.</text>
</comment>
<comment type="similarity">
    <text evidence="1">Belongs to the IspD/TarI cytidylyltransferase family. IspD subfamily.</text>
</comment>
<accession>A4WDV2</accession>
<organism>
    <name type="scientific">Enterobacter sp. (strain 638)</name>
    <dbReference type="NCBI Taxonomy" id="399742"/>
    <lineage>
        <taxon>Bacteria</taxon>
        <taxon>Pseudomonadati</taxon>
        <taxon>Pseudomonadota</taxon>
        <taxon>Gammaproteobacteria</taxon>
        <taxon>Enterobacterales</taxon>
        <taxon>Enterobacteriaceae</taxon>
        <taxon>Enterobacter</taxon>
    </lineage>
</organism>
<sequence length="236" mass="25586">MAVTISDVCAVVPAAGFGRRMQTECPKQYLSIGDKTILEHTVAALLANPRVTRVVIAISPGDARFAALPLANHPQITVVDGGTERADSVLAGIRAAGNVAWVLVHDAARPCLHPDDLARLLAISQTSTVGGILAAPVRDTMKRAEPGLNHIAHTVERVDLWHALTPQFFPRELLHDCLTRALNEGATITDEASALEYCGFHPELVEGRADNIKVTRPEDLQLAEFYLTRMTYQENA</sequence>
<reference key="1">
    <citation type="journal article" date="2010" name="PLoS Genet.">
        <title>Genome sequence of the plant growth promoting endophytic bacterium Enterobacter sp. 638.</title>
        <authorList>
            <person name="Taghavi S."/>
            <person name="van der Lelie D."/>
            <person name="Hoffman A."/>
            <person name="Zhang Y.B."/>
            <person name="Walla M.D."/>
            <person name="Vangronsveld J."/>
            <person name="Newman L."/>
            <person name="Monchy S."/>
        </authorList>
    </citation>
    <scope>NUCLEOTIDE SEQUENCE [LARGE SCALE GENOMIC DNA]</scope>
    <source>
        <strain>638</strain>
    </source>
</reference>
<gene>
    <name evidence="1" type="primary">ispD</name>
    <name type="ordered locus">Ent638_3218</name>
</gene>
<proteinExistence type="inferred from homology"/>